<feature type="chain" id="PRO_0000405429" description="Enoyl-CoA hydratase 2, peroxisomal">
    <location>
        <begin position="1"/>
        <end position="309"/>
    </location>
</feature>
<feature type="domain" description="MaoC-like">
    <location>
        <begin position="183"/>
        <end position="295"/>
    </location>
</feature>
<feature type="short sequence motif" description="Microbody targeting signal" evidence="1">
    <location>
        <begin position="307"/>
        <end position="309"/>
    </location>
</feature>
<feature type="binding site" evidence="1">
    <location>
        <begin position="95"/>
        <end position="96"/>
    </location>
    <ligand>
        <name>substrate</name>
    </ligand>
</feature>
<feature type="binding site" evidence="1">
    <location>
        <position position="124"/>
    </location>
    <ligand>
        <name>substrate</name>
    </ligand>
</feature>
<feature type="binding site" evidence="1">
    <location>
        <begin position="208"/>
        <end position="213"/>
    </location>
    <ligand>
        <name>substrate</name>
    </ligand>
</feature>
<feature type="binding site" evidence="1">
    <location>
        <position position="231"/>
    </location>
    <ligand>
        <name>substrate</name>
    </ligand>
</feature>
<feature type="binding site" evidence="1">
    <location>
        <position position="261"/>
    </location>
    <ligand>
        <name>substrate</name>
    </ligand>
</feature>
<feature type="helix" evidence="5">
    <location>
        <begin position="10"/>
        <end position="15"/>
    </location>
</feature>
<feature type="strand" evidence="5">
    <location>
        <begin position="21"/>
        <end position="25"/>
    </location>
</feature>
<feature type="helix" evidence="5">
    <location>
        <begin position="27"/>
        <end position="36"/>
    </location>
</feature>
<feature type="turn" evidence="5">
    <location>
        <begin position="37"/>
        <end position="40"/>
    </location>
</feature>
<feature type="helix" evidence="5">
    <location>
        <begin position="47"/>
        <end position="50"/>
    </location>
</feature>
<feature type="turn" evidence="5">
    <location>
        <begin position="51"/>
        <end position="53"/>
    </location>
</feature>
<feature type="helix" evidence="5">
    <location>
        <begin position="59"/>
        <end position="61"/>
    </location>
</feature>
<feature type="helix" evidence="5">
    <location>
        <begin position="66"/>
        <end position="73"/>
    </location>
</feature>
<feature type="helix" evidence="5">
    <location>
        <begin position="76"/>
        <end position="79"/>
    </location>
</feature>
<feature type="helix" evidence="5">
    <location>
        <begin position="90"/>
        <end position="92"/>
    </location>
</feature>
<feature type="strand" evidence="5">
    <location>
        <begin position="93"/>
        <end position="104"/>
    </location>
</feature>
<feature type="strand" evidence="5">
    <location>
        <begin position="108"/>
        <end position="124"/>
    </location>
</feature>
<feature type="strand" evidence="5">
    <location>
        <begin position="127"/>
        <end position="138"/>
    </location>
</feature>
<feature type="turn" evidence="5">
    <location>
        <begin position="139"/>
        <end position="141"/>
    </location>
</feature>
<feature type="strand" evidence="5">
    <location>
        <begin position="144"/>
        <end position="154"/>
    </location>
</feature>
<feature type="strand" evidence="5">
    <location>
        <begin position="168"/>
        <end position="170"/>
    </location>
</feature>
<feature type="turn" evidence="5">
    <location>
        <begin position="174"/>
        <end position="177"/>
    </location>
</feature>
<feature type="strand" evidence="5">
    <location>
        <begin position="188"/>
        <end position="194"/>
    </location>
</feature>
<feature type="helix" evidence="5">
    <location>
        <begin position="199"/>
        <end position="203"/>
    </location>
</feature>
<feature type="helix" evidence="5">
    <location>
        <begin position="204"/>
        <end position="206"/>
    </location>
</feature>
<feature type="helix" evidence="5">
    <location>
        <begin position="211"/>
        <end position="213"/>
    </location>
</feature>
<feature type="helix" evidence="5">
    <location>
        <begin position="216"/>
        <end position="221"/>
    </location>
</feature>
<feature type="helix" evidence="5">
    <location>
        <begin position="231"/>
        <end position="245"/>
    </location>
</feature>
<feature type="helix" evidence="5">
    <location>
        <begin position="251"/>
        <end position="253"/>
    </location>
</feature>
<feature type="strand" evidence="5">
    <location>
        <begin position="254"/>
        <end position="261"/>
    </location>
</feature>
<feature type="strand" evidence="5">
    <location>
        <begin position="270"/>
        <end position="278"/>
    </location>
</feature>
<feature type="strand" evidence="5">
    <location>
        <begin position="281"/>
        <end position="288"/>
    </location>
</feature>
<feature type="turn" evidence="5">
    <location>
        <begin position="289"/>
        <end position="292"/>
    </location>
</feature>
<feature type="strand" evidence="5">
    <location>
        <begin position="293"/>
        <end position="302"/>
    </location>
</feature>
<proteinExistence type="evidence at protein level"/>
<evidence type="ECO:0000250" key="1"/>
<evidence type="ECO:0000269" key="2">
    <source>
    </source>
</evidence>
<evidence type="ECO:0000269" key="3">
    <source>
    </source>
</evidence>
<evidence type="ECO:0000305" key="4"/>
<evidence type="ECO:0007829" key="5">
    <source>
        <dbReference type="PDB" id="7MKU"/>
    </source>
</evidence>
<gene>
    <name type="primary">ECH2</name>
    <name type="ordered locus">At1g76150</name>
    <name type="ORF">T23E18.38</name>
    <name type="ORF">T23E18.9</name>
</gene>
<sequence length="309" mass="34082">MATSDSEFNSDLLLAHKLPETRYTYNERDVAIYALGIGACGQDAVDSDELKFVYHRNGQDLIQVLPTFASLFTLGSLTEGLDLPGFKYDPSLLLHGQQYIEIYRPLPSKASLINKVSLAGLQDKGKAAILELETRSYEEGSGELLCMNRTTVFLRGAGGFSNSSQPFSYKNYPSNQGLAVKIPQRQPLTVCEERTQPSQALLYRLSGDYNPLHSDPEFAKLAGFPRPILHGLCTLGFAIKAIIKCVCKGDPTAVKTISGRFLTTVFPGETLITEMWLEGLRVIYQTKVKERNKTVLAGYVDIRGLSSSL</sequence>
<keyword id="KW-0002">3D-structure</keyword>
<keyword id="KW-0276">Fatty acid metabolism</keyword>
<keyword id="KW-0443">Lipid metabolism</keyword>
<keyword id="KW-0456">Lyase</keyword>
<keyword id="KW-0560">Oxidoreductase</keyword>
<keyword id="KW-0576">Peroxisome</keyword>
<keyword id="KW-1185">Reference proteome</keyword>
<name>ECH2_ARATH</name>
<organism>
    <name type="scientific">Arabidopsis thaliana</name>
    <name type="common">Mouse-ear cress</name>
    <dbReference type="NCBI Taxonomy" id="3702"/>
    <lineage>
        <taxon>Eukaryota</taxon>
        <taxon>Viridiplantae</taxon>
        <taxon>Streptophyta</taxon>
        <taxon>Embryophyta</taxon>
        <taxon>Tracheophyta</taxon>
        <taxon>Spermatophyta</taxon>
        <taxon>Magnoliopsida</taxon>
        <taxon>eudicotyledons</taxon>
        <taxon>Gunneridae</taxon>
        <taxon>Pentapetalae</taxon>
        <taxon>rosids</taxon>
        <taxon>malvids</taxon>
        <taxon>Brassicales</taxon>
        <taxon>Brassicaceae</taxon>
        <taxon>Camelineae</taxon>
        <taxon>Arabidopsis</taxon>
    </lineage>
</organism>
<comment type="function">
    <text evidence="2">Bidirectional monofunctional enoyl-CoA hydratase 2 involved in the degradation of even cis-unsaturated fatty acids. Devoid of 3-hydroxyacyl-CoA dehydrogenase activity.</text>
</comment>
<comment type="catalytic activity">
    <reaction evidence="2">
        <text>a (3R)-3-hydroxyacyl-CoA = a (2E)-enoyl-CoA + H2O</text>
        <dbReference type="Rhea" id="RHEA:26526"/>
        <dbReference type="ChEBI" id="CHEBI:15377"/>
        <dbReference type="ChEBI" id="CHEBI:57319"/>
        <dbReference type="ChEBI" id="CHEBI:58856"/>
        <dbReference type="EC" id="4.2.1.119"/>
    </reaction>
</comment>
<comment type="pathway">
    <text>Lipid metabolism; fatty acid beta-oxidation.</text>
</comment>
<comment type="subcellular location">
    <subcellularLocation>
        <location evidence="2 3">Peroxisome</location>
    </subcellularLocation>
</comment>
<comment type="tissue specificity">
    <text evidence="2">Ubiquitous.</text>
</comment>
<comment type="developmental stage">
    <text evidence="2">Expressed in germinating seedlings and senescing leaves.</text>
</comment>
<comment type="sequence caution" evidence="4">
    <conflict type="erroneous gene model prediction">
        <sequence resource="EMBL-CDS" id="AAF17647"/>
    </conflict>
</comment>
<dbReference type="EC" id="4.2.1.119"/>
<dbReference type="EMBL" id="AC009978">
    <property type="protein sequence ID" value="AAF17647.1"/>
    <property type="status" value="ALT_SEQ"/>
    <property type="molecule type" value="Genomic_DNA"/>
</dbReference>
<dbReference type="EMBL" id="CP002684">
    <property type="protein sequence ID" value="AEE35803.1"/>
    <property type="molecule type" value="Genomic_DNA"/>
</dbReference>
<dbReference type="EMBL" id="AY070763">
    <property type="protein sequence ID" value="AAL50100.1"/>
    <property type="molecule type" value="mRNA"/>
</dbReference>
<dbReference type="EMBL" id="AY093712">
    <property type="protein sequence ID" value="AAM10336.1"/>
    <property type="molecule type" value="mRNA"/>
</dbReference>
<dbReference type="RefSeq" id="NP_177742.2">
    <property type="nucleotide sequence ID" value="NM_106264.3"/>
</dbReference>
<dbReference type="PDB" id="7MKU">
    <property type="method" value="X-ray"/>
    <property type="resolution" value="2.65 A"/>
    <property type="chains" value="A/B=1-309"/>
</dbReference>
<dbReference type="PDBsum" id="7MKU"/>
<dbReference type="SMR" id="Q8VYI3"/>
<dbReference type="FunCoup" id="Q8VYI3">
    <property type="interactions" value="1266"/>
</dbReference>
<dbReference type="IntAct" id="Q8VYI3">
    <property type="interactions" value="2"/>
</dbReference>
<dbReference type="STRING" id="3702.Q8VYI3"/>
<dbReference type="PaxDb" id="3702-AT1G76150.1"/>
<dbReference type="ProteomicsDB" id="224720"/>
<dbReference type="EnsemblPlants" id="AT1G76150.1">
    <property type="protein sequence ID" value="AT1G76150.1"/>
    <property type="gene ID" value="AT1G76150"/>
</dbReference>
<dbReference type="GeneID" id="843947"/>
<dbReference type="Gramene" id="AT1G76150.1">
    <property type="protein sequence ID" value="AT1G76150.1"/>
    <property type="gene ID" value="AT1G76150"/>
</dbReference>
<dbReference type="KEGG" id="ath:AT1G76150"/>
<dbReference type="Araport" id="AT1G76150"/>
<dbReference type="TAIR" id="AT1G76150">
    <property type="gene designation" value="ECH2"/>
</dbReference>
<dbReference type="eggNOG" id="KOG1206">
    <property type="taxonomic scope" value="Eukaryota"/>
</dbReference>
<dbReference type="HOGENOM" id="CLU_040078_0_0_1"/>
<dbReference type="InParanoid" id="Q8VYI3"/>
<dbReference type="OMA" id="FKHTDQE"/>
<dbReference type="PhylomeDB" id="Q8VYI3"/>
<dbReference type="BioCyc" id="ARA:AT1G76150-MONOMER"/>
<dbReference type="BRENDA" id="4.2.1.119">
    <property type="organism ID" value="399"/>
</dbReference>
<dbReference type="UniPathway" id="UPA00659"/>
<dbReference type="PRO" id="PR:Q8VYI3"/>
<dbReference type="Proteomes" id="UP000006548">
    <property type="component" value="Chromosome 1"/>
</dbReference>
<dbReference type="ExpressionAtlas" id="Q8VYI3">
    <property type="expression patterns" value="baseline and differential"/>
</dbReference>
<dbReference type="GO" id="GO:0005739">
    <property type="term" value="C:mitochondrion"/>
    <property type="evidence" value="ECO:0007005"/>
    <property type="project" value="TAIR"/>
</dbReference>
<dbReference type="GO" id="GO:0005777">
    <property type="term" value="C:peroxisome"/>
    <property type="evidence" value="ECO:0000314"/>
    <property type="project" value="TAIR"/>
</dbReference>
<dbReference type="GO" id="GO:0016829">
    <property type="term" value="F:lyase activity"/>
    <property type="evidence" value="ECO:0007669"/>
    <property type="project" value="UniProtKB-KW"/>
</dbReference>
<dbReference type="GO" id="GO:0016491">
    <property type="term" value="F:oxidoreductase activity"/>
    <property type="evidence" value="ECO:0007669"/>
    <property type="project" value="UniProtKB-KW"/>
</dbReference>
<dbReference type="GO" id="GO:0033542">
    <property type="term" value="P:fatty acid beta-oxidation, unsaturated, even number"/>
    <property type="evidence" value="ECO:0000315"/>
    <property type="project" value="TAIR"/>
</dbReference>
<dbReference type="CDD" id="cd03448">
    <property type="entry name" value="HDE_HSD"/>
    <property type="match status" value="1"/>
</dbReference>
<dbReference type="FunFam" id="3.10.129.10:FF:000061">
    <property type="entry name" value="Probable dehydrogenase"/>
    <property type="match status" value="1"/>
</dbReference>
<dbReference type="Gene3D" id="3.10.129.10">
    <property type="entry name" value="Hotdog Thioesterase"/>
    <property type="match status" value="1"/>
</dbReference>
<dbReference type="InterPro" id="IPR029069">
    <property type="entry name" value="HotDog_dom_sf"/>
</dbReference>
<dbReference type="InterPro" id="IPR002539">
    <property type="entry name" value="MaoC-like_dom"/>
</dbReference>
<dbReference type="InterPro" id="IPR054357">
    <property type="entry name" value="MFE-2_N"/>
</dbReference>
<dbReference type="PANTHER" id="PTHR13078:SF56">
    <property type="entry name" value="PEROXISOMAL MULTIFUNCTIONAL ENZYME TYPE 2"/>
    <property type="match status" value="1"/>
</dbReference>
<dbReference type="PANTHER" id="PTHR13078">
    <property type="entry name" value="PEROXISOMAL MULTIFUNCTIONAL ENZYME TYPE 2-RELATED"/>
    <property type="match status" value="1"/>
</dbReference>
<dbReference type="Pfam" id="PF01575">
    <property type="entry name" value="MaoC_dehydratas"/>
    <property type="match status" value="1"/>
</dbReference>
<dbReference type="Pfam" id="PF22622">
    <property type="entry name" value="MFE-2_hydrat-2_N"/>
    <property type="match status" value="1"/>
</dbReference>
<dbReference type="SUPFAM" id="SSF54637">
    <property type="entry name" value="Thioesterase/thiol ester dehydrase-isomerase"/>
    <property type="match status" value="2"/>
</dbReference>
<protein>
    <recommendedName>
        <fullName>Enoyl-CoA hydratase 2, peroxisomal</fullName>
        <ecNumber>4.2.1.119</ecNumber>
    </recommendedName>
</protein>
<accession>Q8VYI3</accession>
<accession>Q9SGR7</accession>
<reference key="1">
    <citation type="journal article" date="2000" name="Nature">
        <title>Sequence and analysis of chromosome 1 of the plant Arabidopsis thaliana.</title>
        <authorList>
            <person name="Theologis A."/>
            <person name="Ecker J.R."/>
            <person name="Palm C.J."/>
            <person name="Federspiel N.A."/>
            <person name="Kaul S."/>
            <person name="White O."/>
            <person name="Alonso J."/>
            <person name="Altafi H."/>
            <person name="Araujo R."/>
            <person name="Bowman C.L."/>
            <person name="Brooks S.Y."/>
            <person name="Buehler E."/>
            <person name="Chan A."/>
            <person name="Chao Q."/>
            <person name="Chen H."/>
            <person name="Cheuk R.F."/>
            <person name="Chin C.W."/>
            <person name="Chung M.K."/>
            <person name="Conn L."/>
            <person name="Conway A.B."/>
            <person name="Conway A.R."/>
            <person name="Creasy T.H."/>
            <person name="Dewar K."/>
            <person name="Dunn P."/>
            <person name="Etgu P."/>
            <person name="Feldblyum T.V."/>
            <person name="Feng J.-D."/>
            <person name="Fong B."/>
            <person name="Fujii C.Y."/>
            <person name="Gill J.E."/>
            <person name="Goldsmith A.D."/>
            <person name="Haas B."/>
            <person name="Hansen N.F."/>
            <person name="Hughes B."/>
            <person name="Huizar L."/>
            <person name="Hunter J.L."/>
            <person name="Jenkins J."/>
            <person name="Johnson-Hopson C."/>
            <person name="Khan S."/>
            <person name="Khaykin E."/>
            <person name="Kim C.J."/>
            <person name="Koo H.L."/>
            <person name="Kremenetskaia I."/>
            <person name="Kurtz D.B."/>
            <person name="Kwan A."/>
            <person name="Lam B."/>
            <person name="Langin-Hooper S."/>
            <person name="Lee A."/>
            <person name="Lee J.M."/>
            <person name="Lenz C.A."/>
            <person name="Li J.H."/>
            <person name="Li Y.-P."/>
            <person name="Lin X."/>
            <person name="Liu S.X."/>
            <person name="Liu Z.A."/>
            <person name="Luros J.S."/>
            <person name="Maiti R."/>
            <person name="Marziali A."/>
            <person name="Militscher J."/>
            <person name="Miranda M."/>
            <person name="Nguyen M."/>
            <person name="Nierman W.C."/>
            <person name="Osborne B.I."/>
            <person name="Pai G."/>
            <person name="Peterson J."/>
            <person name="Pham P.K."/>
            <person name="Rizzo M."/>
            <person name="Rooney T."/>
            <person name="Rowley D."/>
            <person name="Sakano H."/>
            <person name="Salzberg S.L."/>
            <person name="Schwartz J.R."/>
            <person name="Shinn P."/>
            <person name="Southwick A.M."/>
            <person name="Sun H."/>
            <person name="Tallon L.J."/>
            <person name="Tambunga G."/>
            <person name="Toriumi M.J."/>
            <person name="Town C.D."/>
            <person name="Utterback T."/>
            <person name="Van Aken S."/>
            <person name="Vaysberg M."/>
            <person name="Vysotskaia V.S."/>
            <person name="Walker M."/>
            <person name="Wu D."/>
            <person name="Yu G."/>
            <person name="Fraser C.M."/>
            <person name="Venter J.C."/>
            <person name="Davis R.W."/>
        </authorList>
    </citation>
    <scope>NUCLEOTIDE SEQUENCE [LARGE SCALE GENOMIC DNA]</scope>
    <source>
        <strain>cv. Columbia</strain>
    </source>
</reference>
<reference key="2">
    <citation type="journal article" date="2017" name="Plant J.">
        <title>Araport11: a complete reannotation of the Arabidopsis thaliana reference genome.</title>
        <authorList>
            <person name="Cheng C.Y."/>
            <person name="Krishnakumar V."/>
            <person name="Chan A.P."/>
            <person name="Thibaud-Nissen F."/>
            <person name="Schobel S."/>
            <person name="Town C.D."/>
        </authorList>
    </citation>
    <scope>GENOME REANNOTATION</scope>
    <source>
        <strain>cv. Columbia</strain>
    </source>
</reference>
<reference key="3">
    <citation type="journal article" date="2003" name="Science">
        <title>Empirical analysis of transcriptional activity in the Arabidopsis genome.</title>
        <authorList>
            <person name="Yamada K."/>
            <person name="Lim J."/>
            <person name="Dale J.M."/>
            <person name="Chen H."/>
            <person name="Shinn P."/>
            <person name="Palm C.J."/>
            <person name="Southwick A.M."/>
            <person name="Wu H.C."/>
            <person name="Kim C.J."/>
            <person name="Nguyen M."/>
            <person name="Pham P.K."/>
            <person name="Cheuk R.F."/>
            <person name="Karlin-Newmann G."/>
            <person name="Liu S.X."/>
            <person name="Lam B."/>
            <person name="Sakano H."/>
            <person name="Wu T."/>
            <person name="Yu G."/>
            <person name="Miranda M."/>
            <person name="Quach H.L."/>
            <person name="Tripp M."/>
            <person name="Chang C.H."/>
            <person name="Lee J.M."/>
            <person name="Toriumi M.J."/>
            <person name="Chan M.M."/>
            <person name="Tang C.C."/>
            <person name="Onodera C.S."/>
            <person name="Deng J.M."/>
            <person name="Akiyama K."/>
            <person name="Ansari Y."/>
            <person name="Arakawa T."/>
            <person name="Banh J."/>
            <person name="Banno F."/>
            <person name="Bowser L."/>
            <person name="Brooks S.Y."/>
            <person name="Carninci P."/>
            <person name="Chao Q."/>
            <person name="Choy N."/>
            <person name="Enju A."/>
            <person name="Goldsmith A.D."/>
            <person name="Gurjal M."/>
            <person name="Hansen N.F."/>
            <person name="Hayashizaki Y."/>
            <person name="Johnson-Hopson C."/>
            <person name="Hsuan V.W."/>
            <person name="Iida K."/>
            <person name="Karnes M."/>
            <person name="Khan S."/>
            <person name="Koesema E."/>
            <person name="Ishida J."/>
            <person name="Jiang P.X."/>
            <person name="Jones T."/>
            <person name="Kawai J."/>
            <person name="Kamiya A."/>
            <person name="Meyers C."/>
            <person name="Nakajima M."/>
            <person name="Narusaka M."/>
            <person name="Seki M."/>
            <person name="Sakurai T."/>
            <person name="Satou M."/>
            <person name="Tamse R."/>
            <person name="Vaysberg M."/>
            <person name="Wallender E.K."/>
            <person name="Wong C."/>
            <person name="Yamamura Y."/>
            <person name="Yuan S."/>
            <person name="Shinozaki K."/>
            <person name="Davis R.W."/>
            <person name="Theologis A."/>
            <person name="Ecker J.R."/>
        </authorList>
    </citation>
    <scope>NUCLEOTIDE SEQUENCE [LARGE SCALE MRNA]</scope>
    <source>
        <strain>cv. Columbia</strain>
    </source>
</reference>
<reference key="4">
    <citation type="journal article" date="2006" name="J. Biol. Chem.">
        <title>Identification and functional characterization of a monofunctional peroxisomal enoyl-CoA hydratase 2 that participates in the degradation of even cis-unsaturated fatty acids in Arabidopsis thaliana.</title>
        <authorList>
            <person name="Goepfert S."/>
            <person name="Hiltunen J.K."/>
            <person name="Poirier Y."/>
        </authorList>
    </citation>
    <scope>FUNCTION</scope>
    <scope>CATALYTIC ACTIVITY</scope>
    <scope>SUBCELLULAR LOCATION</scope>
    <scope>TISSUE SPECIFICITY</scope>
    <scope>DEVELOPMENTAL STAGE</scope>
</reference>
<reference key="5">
    <citation type="journal article" date="2007" name="Plant Cell">
        <title>Proteome analysis of Arabidopsis leaf peroxisomes reveals novel targeting peptides, metabolic pathways, and defense mechanisms.</title>
        <authorList>
            <person name="Reumann S."/>
            <person name="Babujee L."/>
            <person name="Ma C."/>
            <person name="Wienkoop S."/>
            <person name="Siemsen T."/>
            <person name="Antonicelli G.E."/>
            <person name="Rasche N."/>
            <person name="Lueder F."/>
            <person name="Weckwerth W."/>
            <person name="Jahn O."/>
        </authorList>
    </citation>
    <scope>SUBCELLULAR LOCATION</scope>
</reference>